<sequence length="76" mass="9083">MQVLVRDNNVDQALRILKKKLQREGVFREMRLREAFEKPSIKKAREKAEAIGRQRKLARKQMQREGLLPTKPRKDK</sequence>
<accession>Q8U9T8</accession>
<gene>
    <name type="primary">rpsU3</name>
    <name type="ordered locus">Atu3637</name>
    <name type="ORF">AGR_L_2379</name>
</gene>
<name>RS21C_AGRFC</name>
<dbReference type="EMBL" id="AE007870">
    <property type="protein sequence ID" value="AAK89760.2"/>
    <property type="molecule type" value="Genomic_DNA"/>
</dbReference>
<dbReference type="PIR" id="AC3004">
    <property type="entry name" value="AC3004"/>
</dbReference>
<dbReference type="PIR" id="F98279">
    <property type="entry name" value="F98279"/>
</dbReference>
<dbReference type="RefSeq" id="NP_356975.2">
    <property type="nucleotide sequence ID" value="NC_003063.2"/>
</dbReference>
<dbReference type="RefSeq" id="WP_010973205.1">
    <property type="nucleotide sequence ID" value="NC_003063.2"/>
</dbReference>
<dbReference type="SMR" id="Q8U9T8"/>
<dbReference type="STRING" id="176299.Atu3637"/>
<dbReference type="EnsemblBacteria" id="AAK89760">
    <property type="protein sequence ID" value="AAK89760"/>
    <property type="gene ID" value="Atu3637"/>
</dbReference>
<dbReference type="GeneID" id="1135511"/>
<dbReference type="KEGG" id="atu:Atu3637"/>
<dbReference type="PATRIC" id="fig|176299.10.peg.3482"/>
<dbReference type="eggNOG" id="COG0828">
    <property type="taxonomic scope" value="Bacteria"/>
</dbReference>
<dbReference type="HOGENOM" id="CLU_159258_0_1_5"/>
<dbReference type="OrthoDB" id="9811907at2"/>
<dbReference type="PhylomeDB" id="Q8U9T8"/>
<dbReference type="BioCyc" id="AGRO:ATU3637-MONOMER"/>
<dbReference type="Proteomes" id="UP000000813">
    <property type="component" value="Chromosome linear"/>
</dbReference>
<dbReference type="GO" id="GO:1990904">
    <property type="term" value="C:ribonucleoprotein complex"/>
    <property type="evidence" value="ECO:0007669"/>
    <property type="project" value="UniProtKB-KW"/>
</dbReference>
<dbReference type="GO" id="GO:0005840">
    <property type="term" value="C:ribosome"/>
    <property type="evidence" value="ECO:0007669"/>
    <property type="project" value="UniProtKB-KW"/>
</dbReference>
<dbReference type="GO" id="GO:0003735">
    <property type="term" value="F:structural constituent of ribosome"/>
    <property type="evidence" value="ECO:0007669"/>
    <property type="project" value="InterPro"/>
</dbReference>
<dbReference type="GO" id="GO:0006412">
    <property type="term" value="P:translation"/>
    <property type="evidence" value="ECO:0007669"/>
    <property type="project" value="UniProtKB-UniRule"/>
</dbReference>
<dbReference type="Gene3D" id="1.20.5.1150">
    <property type="entry name" value="Ribosomal protein S8"/>
    <property type="match status" value="1"/>
</dbReference>
<dbReference type="HAMAP" id="MF_00358">
    <property type="entry name" value="Ribosomal_bS21"/>
    <property type="match status" value="1"/>
</dbReference>
<dbReference type="InterPro" id="IPR001911">
    <property type="entry name" value="Ribosomal_bS21"/>
</dbReference>
<dbReference type="InterPro" id="IPR038380">
    <property type="entry name" value="Ribosomal_bS21_sf"/>
</dbReference>
<dbReference type="NCBIfam" id="TIGR00030">
    <property type="entry name" value="S21p"/>
    <property type="match status" value="1"/>
</dbReference>
<dbReference type="PANTHER" id="PTHR21109">
    <property type="entry name" value="MITOCHONDRIAL 28S RIBOSOMAL PROTEIN S21"/>
    <property type="match status" value="1"/>
</dbReference>
<dbReference type="PANTHER" id="PTHR21109:SF0">
    <property type="entry name" value="SMALL RIBOSOMAL SUBUNIT PROTEIN BS21M"/>
    <property type="match status" value="1"/>
</dbReference>
<dbReference type="Pfam" id="PF01165">
    <property type="entry name" value="Ribosomal_S21"/>
    <property type="match status" value="1"/>
</dbReference>
<comment type="similarity">
    <text evidence="3">Belongs to the bacterial ribosomal protein bS21 family.</text>
</comment>
<organism>
    <name type="scientific">Agrobacterium fabrum (strain C58 / ATCC 33970)</name>
    <name type="common">Agrobacterium tumefaciens (strain C58)</name>
    <dbReference type="NCBI Taxonomy" id="176299"/>
    <lineage>
        <taxon>Bacteria</taxon>
        <taxon>Pseudomonadati</taxon>
        <taxon>Pseudomonadota</taxon>
        <taxon>Alphaproteobacteria</taxon>
        <taxon>Hyphomicrobiales</taxon>
        <taxon>Rhizobiaceae</taxon>
        <taxon>Rhizobium/Agrobacterium group</taxon>
        <taxon>Agrobacterium</taxon>
        <taxon>Agrobacterium tumefaciens complex</taxon>
    </lineage>
</organism>
<reference key="1">
    <citation type="journal article" date="2001" name="Science">
        <title>The genome of the natural genetic engineer Agrobacterium tumefaciens C58.</title>
        <authorList>
            <person name="Wood D.W."/>
            <person name="Setubal J.C."/>
            <person name="Kaul R."/>
            <person name="Monks D.E."/>
            <person name="Kitajima J.P."/>
            <person name="Okura V.K."/>
            <person name="Zhou Y."/>
            <person name="Chen L."/>
            <person name="Wood G.E."/>
            <person name="Almeida N.F. Jr."/>
            <person name="Woo L."/>
            <person name="Chen Y."/>
            <person name="Paulsen I.T."/>
            <person name="Eisen J.A."/>
            <person name="Karp P.D."/>
            <person name="Bovee D. Sr."/>
            <person name="Chapman P."/>
            <person name="Clendenning J."/>
            <person name="Deatherage G."/>
            <person name="Gillet W."/>
            <person name="Grant C."/>
            <person name="Kutyavin T."/>
            <person name="Levy R."/>
            <person name="Li M.-J."/>
            <person name="McClelland E."/>
            <person name="Palmieri A."/>
            <person name="Raymond C."/>
            <person name="Rouse G."/>
            <person name="Saenphimmachak C."/>
            <person name="Wu Z."/>
            <person name="Romero P."/>
            <person name="Gordon D."/>
            <person name="Zhang S."/>
            <person name="Yoo H."/>
            <person name="Tao Y."/>
            <person name="Biddle P."/>
            <person name="Jung M."/>
            <person name="Krespan W."/>
            <person name="Perry M."/>
            <person name="Gordon-Kamm B."/>
            <person name="Liao L."/>
            <person name="Kim S."/>
            <person name="Hendrick C."/>
            <person name="Zhao Z.-Y."/>
            <person name="Dolan M."/>
            <person name="Chumley F."/>
            <person name="Tingey S.V."/>
            <person name="Tomb J.-F."/>
            <person name="Gordon M.P."/>
            <person name="Olson M.V."/>
            <person name="Nester E.W."/>
        </authorList>
    </citation>
    <scope>NUCLEOTIDE SEQUENCE [LARGE SCALE GENOMIC DNA]</scope>
    <source>
        <strain>C58 / ATCC 33970</strain>
    </source>
</reference>
<reference key="2">
    <citation type="journal article" date="2001" name="Science">
        <title>Genome sequence of the plant pathogen and biotechnology agent Agrobacterium tumefaciens C58.</title>
        <authorList>
            <person name="Goodner B."/>
            <person name="Hinkle G."/>
            <person name="Gattung S."/>
            <person name="Miller N."/>
            <person name="Blanchard M."/>
            <person name="Qurollo B."/>
            <person name="Goldman B.S."/>
            <person name="Cao Y."/>
            <person name="Askenazi M."/>
            <person name="Halling C."/>
            <person name="Mullin L."/>
            <person name="Houmiel K."/>
            <person name="Gordon J."/>
            <person name="Vaudin M."/>
            <person name="Iartchouk O."/>
            <person name="Epp A."/>
            <person name="Liu F."/>
            <person name="Wollam C."/>
            <person name="Allinger M."/>
            <person name="Doughty D."/>
            <person name="Scott C."/>
            <person name="Lappas C."/>
            <person name="Markelz B."/>
            <person name="Flanagan C."/>
            <person name="Crowell C."/>
            <person name="Gurson J."/>
            <person name="Lomo C."/>
            <person name="Sear C."/>
            <person name="Strub G."/>
            <person name="Cielo C."/>
            <person name="Slater S."/>
        </authorList>
    </citation>
    <scope>NUCLEOTIDE SEQUENCE [LARGE SCALE GENOMIC DNA]</scope>
    <source>
        <strain>C58 / ATCC 33970</strain>
    </source>
</reference>
<proteinExistence type="inferred from homology"/>
<feature type="chain" id="PRO_0000178285" description="Small ribosomal subunit protein bS21C">
    <location>
        <begin position="1"/>
        <end position="76"/>
    </location>
</feature>
<feature type="region of interest" description="Disordered" evidence="2">
    <location>
        <begin position="52"/>
        <end position="76"/>
    </location>
</feature>
<protein>
    <recommendedName>
        <fullName evidence="1">Small ribosomal subunit protein bS21C</fullName>
    </recommendedName>
    <alternativeName>
        <fullName evidence="3">30S ribosomal protein S21 3</fullName>
    </alternativeName>
</protein>
<keyword id="KW-1185">Reference proteome</keyword>
<keyword id="KW-0687">Ribonucleoprotein</keyword>
<keyword id="KW-0689">Ribosomal protein</keyword>
<evidence type="ECO:0000255" key="1">
    <source>
        <dbReference type="HAMAP-Rule" id="MF_00358"/>
    </source>
</evidence>
<evidence type="ECO:0000256" key="2">
    <source>
        <dbReference type="SAM" id="MobiDB-lite"/>
    </source>
</evidence>
<evidence type="ECO:0000305" key="3"/>